<keyword id="KW-0997">Cell inner membrane</keyword>
<keyword id="KW-1003">Cell membrane</keyword>
<keyword id="KW-0472">Membrane</keyword>
<keyword id="KW-0520">NAD</keyword>
<keyword id="KW-0874">Quinone</keyword>
<keyword id="KW-1185">Reference proteome</keyword>
<keyword id="KW-1278">Translocase</keyword>
<keyword id="KW-0812">Transmembrane</keyword>
<keyword id="KW-1133">Transmembrane helix</keyword>
<keyword id="KW-0813">Transport</keyword>
<keyword id="KW-0830">Ubiquinone</keyword>
<reference key="1">
    <citation type="journal article" date="2009" name="Appl. Environ. Microbiol.">
        <title>Three genomes from the phylum Acidobacteria provide insight into the lifestyles of these microorganisms in soils.</title>
        <authorList>
            <person name="Ward N.L."/>
            <person name="Challacombe J.F."/>
            <person name="Janssen P.H."/>
            <person name="Henrissat B."/>
            <person name="Coutinho P.M."/>
            <person name="Wu M."/>
            <person name="Xie G."/>
            <person name="Haft D.H."/>
            <person name="Sait M."/>
            <person name="Badger J."/>
            <person name="Barabote R.D."/>
            <person name="Bradley B."/>
            <person name="Brettin T.S."/>
            <person name="Brinkac L.M."/>
            <person name="Bruce D."/>
            <person name="Creasy T."/>
            <person name="Daugherty S.C."/>
            <person name="Davidsen T.M."/>
            <person name="DeBoy R.T."/>
            <person name="Detter J.C."/>
            <person name="Dodson R.J."/>
            <person name="Durkin A.S."/>
            <person name="Ganapathy A."/>
            <person name="Gwinn-Giglio M."/>
            <person name="Han C.S."/>
            <person name="Khouri H."/>
            <person name="Kiss H."/>
            <person name="Kothari S.P."/>
            <person name="Madupu R."/>
            <person name="Nelson K.E."/>
            <person name="Nelson W.C."/>
            <person name="Paulsen I."/>
            <person name="Penn K."/>
            <person name="Ren Q."/>
            <person name="Rosovitz M.J."/>
            <person name="Selengut J.D."/>
            <person name="Shrivastava S."/>
            <person name="Sullivan S.A."/>
            <person name="Tapia R."/>
            <person name="Thompson L.S."/>
            <person name="Watkins K.L."/>
            <person name="Yang Q."/>
            <person name="Yu C."/>
            <person name="Zafar N."/>
            <person name="Zhou L."/>
            <person name="Kuske C.R."/>
        </authorList>
    </citation>
    <scope>NUCLEOTIDE SEQUENCE [LARGE SCALE GENOMIC DNA]</scope>
    <source>
        <strain>Ellin345</strain>
    </source>
</reference>
<protein>
    <recommendedName>
        <fullName evidence="1">NADH-quinone oxidoreductase subunit N 2</fullName>
        <ecNumber evidence="1">7.1.1.-</ecNumber>
    </recommendedName>
    <alternativeName>
        <fullName evidence="1">NADH dehydrogenase I subunit N 2</fullName>
    </alternativeName>
    <alternativeName>
        <fullName evidence="1">NDH-1 subunit N 2</fullName>
    </alternativeName>
</protein>
<gene>
    <name evidence="1" type="primary">nuoN2</name>
    <name type="ordered locus">Acid345_1303</name>
</gene>
<organism>
    <name type="scientific">Koribacter versatilis (strain Ellin345)</name>
    <dbReference type="NCBI Taxonomy" id="204669"/>
    <lineage>
        <taxon>Bacteria</taxon>
        <taxon>Pseudomonadati</taxon>
        <taxon>Acidobacteriota</taxon>
        <taxon>Terriglobia</taxon>
        <taxon>Terriglobales</taxon>
        <taxon>Candidatus Korobacteraceae</taxon>
        <taxon>Candidatus Korobacter</taxon>
    </lineage>
</organism>
<comment type="function">
    <text evidence="1">NDH-1 shuttles electrons from NADH, via FMN and iron-sulfur (Fe-S) centers, to quinones in the respiratory chain. The immediate electron acceptor for the enzyme in this species is believed to be ubiquinone. Couples the redox reaction to proton translocation (for every two electrons transferred, four hydrogen ions are translocated across the cytoplasmic membrane), and thus conserves the redox energy in a proton gradient.</text>
</comment>
<comment type="catalytic activity">
    <reaction evidence="1">
        <text>a quinone + NADH + 5 H(+)(in) = a quinol + NAD(+) + 4 H(+)(out)</text>
        <dbReference type="Rhea" id="RHEA:57888"/>
        <dbReference type="ChEBI" id="CHEBI:15378"/>
        <dbReference type="ChEBI" id="CHEBI:24646"/>
        <dbReference type="ChEBI" id="CHEBI:57540"/>
        <dbReference type="ChEBI" id="CHEBI:57945"/>
        <dbReference type="ChEBI" id="CHEBI:132124"/>
    </reaction>
</comment>
<comment type="subunit">
    <text evidence="1">NDH-1 is composed of 14 different subunits. Subunits NuoA, H, J, K, L, M, N constitute the membrane sector of the complex.</text>
</comment>
<comment type="subcellular location">
    <subcellularLocation>
        <location evidence="1">Cell inner membrane</location>
        <topology evidence="1">Multi-pass membrane protein</topology>
    </subcellularLocation>
</comment>
<comment type="similarity">
    <text evidence="1">Belongs to the complex I subunit 2 family.</text>
</comment>
<dbReference type="EC" id="7.1.1.-" evidence="1"/>
<dbReference type="EMBL" id="CP000360">
    <property type="protein sequence ID" value="ABF40305.1"/>
    <property type="molecule type" value="Genomic_DNA"/>
</dbReference>
<dbReference type="RefSeq" id="WP_011522107.1">
    <property type="nucleotide sequence ID" value="NC_008009.1"/>
</dbReference>
<dbReference type="SMR" id="Q1IS45"/>
<dbReference type="STRING" id="204669.Acid345_1303"/>
<dbReference type="EnsemblBacteria" id="ABF40305">
    <property type="protein sequence ID" value="ABF40305"/>
    <property type="gene ID" value="Acid345_1303"/>
</dbReference>
<dbReference type="KEGG" id="aba:Acid345_1303"/>
<dbReference type="eggNOG" id="COG1007">
    <property type="taxonomic scope" value="Bacteria"/>
</dbReference>
<dbReference type="HOGENOM" id="CLU_007100_1_5_0"/>
<dbReference type="OrthoDB" id="9807568at2"/>
<dbReference type="Proteomes" id="UP000002432">
    <property type="component" value="Chromosome"/>
</dbReference>
<dbReference type="GO" id="GO:0005886">
    <property type="term" value="C:plasma membrane"/>
    <property type="evidence" value="ECO:0007669"/>
    <property type="project" value="UniProtKB-SubCell"/>
</dbReference>
<dbReference type="GO" id="GO:0008137">
    <property type="term" value="F:NADH dehydrogenase (ubiquinone) activity"/>
    <property type="evidence" value="ECO:0007669"/>
    <property type="project" value="InterPro"/>
</dbReference>
<dbReference type="GO" id="GO:0050136">
    <property type="term" value="F:NADH:ubiquinone reductase (non-electrogenic) activity"/>
    <property type="evidence" value="ECO:0007669"/>
    <property type="project" value="UniProtKB-UniRule"/>
</dbReference>
<dbReference type="GO" id="GO:0048038">
    <property type="term" value="F:quinone binding"/>
    <property type="evidence" value="ECO:0007669"/>
    <property type="project" value="UniProtKB-KW"/>
</dbReference>
<dbReference type="GO" id="GO:0042773">
    <property type="term" value="P:ATP synthesis coupled electron transport"/>
    <property type="evidence" value="ECO:0007669"/>
    <property type="project" value="InterPro"/>
</dbReference>
<dbReference type="HAMAP" id="MF_00445">
    <property type="entry name" value="NDH1_NuoN_1"/>
    <property type="match status" value="1"/>
</dbReference>
<dbReference type="InterPro" id="IPR010096">
    <property type="entry name" value="NADH-Q_OxRdtase_suN/2"/>
</dbReference>
<dbReference type="InterPro" id="IPR001750">
    <property type="entry name" value="ND/Mrp_TM"/>
</dbReference>
<dbReference type="NCBIfam" id="TIGR01770">
    <property type="entry name" value="NDH_I_N"/>
    <property type="match status" value="1"/>
</dbReference>
<dbReference type="PANTHER" id="PTHR22773">
    <property type="entry name" value="NADH DEHYDROGENASE"/>
    <property type="match status" value="1"/>
</dbReference>
<dbReference type="Pfam" id="PF00361">
    <property type="entry name" value="Proton_antipo_M"/>
    <property type="match status" value="1"/>
</dbReference>
<dbReference type="PRINTS" id="PR01434">
    <property type="entry name" value="NADHDHGNASE5"/>
</dbReference>
<sequence>MSNFQFAIPTIDYIRILPEIVLAVFGIVVMMADALIPQNNSKKPLGYLSLIGVLVSLGAIACQARYPGMYDVNNGTGFWGMVHVDSFSLFFHVLIALITAAVLLVSFEYMDVQRMRSGEYYAIILFSALGMMLMTSATELVLIFIALEISSIGSYVLAAMRRRVAESAESSLKYFLLGSFATAFFLYGVALIFGATGSTNVYTIAAALQNMHPLQPIIYLAVALMFIGLGFKVAAAPFHVWTPDVYEGAPSPIVALMSTGPKAAAFAVLLRVLFAMNAPGWFWIVWVSAALSMTIGNIGALVQSNVKRLLAYSSIAHAGYMLVAFAAAKDAGISAAIFYTATYAAMNVGAFAVVSHFANTGEKYVTLEDYAGLGRRSPLLAAILTVFLLSLIGIPVTGGFFAKFYVFTSALQSHLVWLTIIGVINSAVGAYYYLRIIVYMYMRDEREEVPVARMPFGLALALAMCLMFTIYLGVLPTQFINYALKSAQDLVR</sequence>
<proteinExistence type="inferred from homology"/>
<evidence type="ECO:0000255" key="1">
    <source>
        <dbReference type="HAMAP-Rule" id="MF_00445"/>
    </source>
</evidence>
<name>NUON2_KORVE</name>
<accession>Q1IS45</accession>
<feature type="chain" id="PRO_0000391086" description="NADH-quinone oxidoreductase subunit N 2">
    <location>
        <begin position="1"/>
        <end position="492"/>
    </location>
</feature>
<feature type="transmembrane region" description="Helical" evidence="1">
    <location>
        <begin position="16"/>
        <end position="36"/>
    </location>
</feature>
<feature type="transmembrane region" description="Helical" evidence="1">
    <location>
        <begin position="44"/>
        <end position="64"/>
    </location>
</feature>
<feature type="transmembrane region" description="Helical" evidence="1">
    <location>
        <begin position="87"/>
        <end position="107"/>
    </location>
</feature>
<feature type="transmembrane region" description="Helical" evidence="1">
    <location>
        <begin position="118"/>
        <end position="138"/>
    </location>
</feature>
<feature type="transmembrane region" description="Helical" evidence="1">
    <location>
        <begin position="140"/>
        <end position="160"/>
    </location>
</feature>
<feature type="transmembrane region" description="Helical" evidence="1">
    <location>
        <begin position="175"/>
        <end position="195"/>
    </location>
</feature>
<feature type="transmembrane region" description="Helical" evidence="1">
    <location>
        <begin position="216"/>
        <end position="236"/>
    </location>
</feature>
<feature type="transmembrane region" description="Helical" evidence="1">
    <location>
        <begin position="250"/>
        <end position="270"/>
    </location>
</feature>
<feature type="transmembrane region" description="Helical" evidence="1">
    <location>
        <begin position="282"/>
        <end position="302"/>
    </location>
</feature>
<feature type="transmembrane region" description="Helical" evidence="1">
    <location>
        <begin position="309"/>
        <end position="329"/>
    </location>
</feature>
<feature type="transmembrane region" description="Helical" evidence="1">
    <location>
        <begin position="333"/>
        <end position="353"/>
    </location>
</feature>
<feature type="transmembrane region" description="Helical" evidence="1">
    <location>
        <begin position="381"/>
        <end position="401"/>
    </location>
</feature>
<feature type="transmembrane region" description="Helical" evidence="1">
    <location>
        <begin position="416"/>
        <end position="438"/>
    </location>
</feature>
<feature type="transmembrane region" description="Helical" evidence="1">
    <location>
        <begin position="455"/>
        <end position="475"/>
    </location>
</feature>